<gene>
    <name evidence="1" type="primary">plsY</name>
    <name type="ordered locus">Daud_1171</name>
</gene>
<name>PLSY_DESAP</name>
<sequence>MSALAVILVIGLSYLVGSVPTGYLIARHVKGIDIRGHGSGNIGATNVWRTLGPGWGLASLVGDTAKGIVAVLLGRAVGVPGLELLTGAAALTGHGWSVFLRFQGGKIIATSLGVLIMLPPVALATAAAVWIAVLALTRYVSLASIIAASSVPLAFALGGVGWRHVLFGLFLALVAVYKHRANIDRLLKGKESRFSFRK</sequence>
<proteinExistence type="inferred from homology"/>
<organism>
    <name type="scientific">Desulforudis audaxviator (strain MP104C)</name>
    <dbReference type="NCBI Taxonomy" id="477974"/>
    <lineage>
        <taxon>Bacteria</taxon>
        <taxon>Bacillati</taxon>
        <taxon>Bacillota</taxon>
        <taxon>Clostridia</taxon>
        <taxon>Thermoanaerobacterales</taxon>
        <taxon>Candidatus Desulforudaceae</taxon>
        <taxon>Candidatus Desulforudis</taxon>
    </lineage>
</organism>
<comment type="function">
    <text evidence="1">Catalyzes the transfer of an acyl group from acyl-phosphate (acyl-PO(4)) to glycerol-3-phosphate (G3P) to form lysophosphatidic acid (LPA). This enzyme utilizes acyl-phosphate as fatty acyl donor, but not acyl-CoA or acyl-ACP.</text>
</comment>
<comment type="catalytic activity">
    <reaction evidence="1">
        <text>an acyl phosphate + sn-glycerol 3-phosphate = a 1-acyl-sn-glycero-3-phosphate + phosphate</text>
        <dbReference type="Rhea" id="RHEA:34075"/>
        <dbReference type="ChEBI" id="CHEBI:43474"/>
        <dbReference type="ChEBI" id="CHEBI:57597"/>
        <dbReference type="ChEBI" id="CHEBI:57970"/>
        <dbReference type="ChEBI" id="CHEBI:59918"/>
        <dbReference type="EC" id="2.3.1.275"/>
    </reaction>
</comment>
<comment type="pathway">
    <text evidence="1">Lipid metabolism; phospholipid metabolism.</text>
</comment>
<comment type="subunit">
    <text evidence="1">Probably interacts with PlsX.</text>
</comment>
<comment type="subcellular location">
    <subcellularLocation>
        <location evidence="1">Cell membrane</location>
        <topology evidence="1">Multi-pass membrane protein</topology>
    </subcellularLocation>
</comment>
<comment type="similarity">
    <text evidence="1">Belongs to the PlsY family.</text>
</comment>
<feature type="chain" id="PRO_1000136079" description="Glycerol-3-phosphate acyltransferase">
    <location>
        <begin position="1"/>
        <end position="198"/>
    </location>
</feature>
<feature type="transmembrane region" description="Helical" evidence="1">
    <location>
        <begin position="5"/>
        <end position="25"/>
    </location>
</feature>
<feature type="transmembrane region" description="Helical" evidence="1">
    <location>
        <begin position="114"/>
        <end position="134"/>
    </location>
</feature>
<feature type="transmembrane region" description="Helical" evidence="1">
    <location>
        <begin position="154"/>
        <end position="176"/>
    </location>
</feature>
<dbReference type="EC" id="2.3.1.275" evidence="1"/>
<dbReference type="EMBL" id="CP000860">
    <property type="protein sequence ID" value="ACA59682.1"/>
    <property type="molecule type" value="Genomic_DNA"/>
</dbReference>
<dbReference type="RefSeq" id="WP_012302268.1">
    <property type="nucleotide sequence ID" value="NC_010424.1"/>
</dbReference>
<dbReference type="SMR" id="B1I461"/>
<dbReference type="STRING" id="477974.Daud_1171"/>
<dbReference type="KEGG" id="dau:Daud_1171"/>
<dbReference type="eggNOG" id="COG0344">
    <property type="taxonomic scope" value="Bacteria"/>
</dbReference>
<dbReference type="HOGENOM" id="CLU_081254_4_0_9"/>
<dbReference type="OrthoDB" id="9777124at2"/>
<dbReference type="UniPathway" id="UPA00085"/>
<dbReference type="Proteomes" id="UP000008544">
    <property type="component" value="Chromosome"/>
</dbReference>
<dbReference type="GO" id="GO:0005886">
    <property type="term" value="C:plasma membrane"/>
    <property type="evidence" value="ECO:0007669"/>
    <property type="project" value="UniProtKB-SubCell"/>
</dbReference>
<dbReference type="GO" id="GO:0043772">
    <property type="term" value="F:acyl-phosphate glycerol-3-phosphate acyltransferase activity"/>
    <property type="evidence" value="ECO:0007669"/>
    <property type="project" value="UniProtKB-UniRule"/>
</dbReference>
<dbReference type="GO" id="GO:0008654">
    <property type="term" value="P:phospholipid biosynthetic process"/>
    <property type="evidence" value="ECO:0007669"/>
    <property type="project" value="UniProtKB-UniRule"/>
</dbReference>
<dbReference type="HAMAP" id="MF_01043">
    <property type="entry name" value="PlsY"/>
    <property type="match status" value="1"/>
</dbReference>
<dbReference type="InterPro" id="IPR003811">
    <property type="entry name" value="G3P_acylTferase_PlsY"/>
</dbReference>
<dbReference type="NCBIfam" id="TIGR00023">
    <property type="entry name" value="glycerol-3-phosphate 1-O-acyltransferase PlsY"/>
    <property type="match status" value="1"/>
</dbReference>
<dbReference type="PANTHER" id="PTHR30309:SF0">
    <property type="entry name" value="GLYCEROL-3-PHOSPHATE ACYLTRANSFERASE-RELATED"/>
    <property type="match status" value="1"/>
</dbReference>
<dbReference type="PANTHER" id="PTHR30309">
    <property type="entry name" value="INNER MEMBRANE PROTEIN YGIH"/>
    <property type="match status" value="1"/>
</dbReference>
<dbReference type="Pfam" id="PF02660">
    <property type="entry name" value="G3P_acyltransf"/>
    <property type="match status" value="1"/>
</dbReference>
<dbReference type="SMART" id="SM01207">
    <property type="entry name" value="G3P_acyltransf"/>
    <property type="match status" value="1"/>
</dbReference>
<accession>B1I461</accession>
<reference key="1">
    <citation type="submission" date="2007-10" db="EMBL/GenBank/DDBJ databases">
        <title>Complete sequence of chromosome of Desulforudis audaxviator MP104C.</title>
        <authorList>
            <person name="Copeland A."/>
            <person name="Lucas S."/>
            <person name="Lapidus A."/>
            <person name="Barry K."/>
            <person name="Glavina del Rio T."/>
            <person name="Dalin E."/>
            <person name="Tice H."/>
            <person name="Bruce D."/>
            <person name="Pitluck S."/>
            <person name="Lowry S.R."/>
            <person name="Larimer F."/>
            <person name="Land M.L."/>
            <person name="Hauser L."/>
            <person name="Kyrpides N."/>
            <person name="Ivanova N.N."/>
            <person name="Richardson P."/>
        </authorList>
    </citation>
    <scope>NUCLEOTIDE SEQUENCE [LARGE SCALE GENOMIC DNA]</scope>
    <source>
        <strain>MP104C</strain>
    </source>
</reference>
<evidence type="ECO:0000255" key="1">
    <source>
        <dbReference type="HAMAP-Rule" id="MF_01043"/>
    </source>
</evidence>
<keyword id="KW-1003">Cell membrane</keyword>
<keyword id="KW-0444">Lipid biosynthesis</keyword>
<keyword id="KW-0443">Lipid metabolism</keyword>
<keyword id="KW-0472">Membrane</keyword>
<keyword id="KW-0594">Phospholipid biosynthesis</keyword>
<keyword id="KW-1208">Phospholipid metabolism</keyword>
<keyword id="KW-1185">Reference proteome</keyword>
<keyword id="KW-0808">Transferase</keyword>
<keyword id="KW-0812">Transmembrane</keyword>
<keyword id="KW-1133">Transmembrane helix</keyword>
<protein>
    <recommendedName>
        <fullName evidence="1">Glycerol-3-phosphate acyltransferase</fullName>
    </recommendedName>
    <alternativeName>
        <fullName evidence="1">Acyl-PO4 G3P acyltransferase</fullName>
    </alternativeName>
    <alternativeName>
        <fullName evidence="1">Acyl-phosphate--glycerol-3-phosphate acyltransferase</fullName>
    </alternativeName>
    <alternativeName>
        <fullName evidence="1">G3P acyltransferase</fullName>
        <shortName evidence="1">GPAT</shortName>
        <ecNumber evidence="1">2.3.1.275</ecNumber>
    </alternativeName>
    <alternativeName>
        <fullName evidence="1">Lysophosphatidic acid synthase</fullName>
        <shortName evidence="1">LPA synthase</shortName>
    </alternativeName>
</protein>